<organism>
    <name type="scientific">Aromatoleum aromaticum (strain DSM 19018 / LMG 30748 / EbN1)</name>
    <name type="common">Azoarcus sp. (strain EbN1)</name>
    <dbReference type="NCBI Taxonomy" id="76114"/>
    <lineage>
        <taxon>Bacteria</taxon>
        <taxon>Pseudomonadati</taxon>
        <taxon>Pseudomonadota</taxon>
        <taxon>Betaproteobacteria</taxon>
        <taxon>Rhodocyclales</taxon>
        <taxon>Rhodocyclaceae</taxon>
        <taxon>Aromatoleum</taxon>
    </lineage>
</organism>
<gene>
    <name evidence="1" type="primary">accA</name>
    <name type="ordered locus">AZOSEA23490</name>
    <name type="ORF">ebA4148</name>
</gene>
<reference key="1">
    <citation type="journal article" date="2005" name="Arch. Microbiol.">
        <title>The genome sequence of an anaerobic aromatic-degrading denitrifying bacterium, strain EbN1.</title>
        <authorList>
            <person name="Rabus R."/>
            <person name="Kube M."/>
            <person name="Heider J."/>
            <person name="Beck A."/>
            <person name="Heitmann K."/>
            <person name="Widdel F."/>
            <person name="Reinhardt R."/>
        </authorList>
    </citation>
    <scope>NUCLEOTIDE SEQUENCE [LARGE SCALE GENOMIC DNA]</scope>
    <source>
        <strain>DSM 19018 / LMG 30748 / EbN1</strain>
    </source>
</reference>
<accession>Q5P2J0</accession>
<dbReference type="EC" id="2.1.3.15" evidence="1"/>
<dbReference type="EMBL" id="CR555306">
    <property type="protein sequence ID" value="CAI08474.1"/>
    <property type="status" value="ALT_INIT"/>
    <property type="molecule type" value="Genomic_DNA"/>
</dbReference>
<dbReference type="RefSeq" id="WP_011238161.1">
    <property type="nucleotide sequence ID" value="NC_006513.1"/>
</dbReference>
<dbReference type="SMR" id="Q5P2J0"/>
<dbReference type="STRING" id="76114.ebA4148"/>
<dbReference type="KEGG" id="eba:ebA4148"/>
<dbReference type="eggNOG" id="COG0825">
    <property type="taxonomic scope" value="Bacteria"/>
</dbReference>
<dbReference type="HOGENOM" id="CLU_015486_0_2_4"/>
<dbReference type="OrthoDB" id="9808023at2"/>
<dbReference type="UniPathway" id="UPA00655">
    <property type="reaction ID" value="UER00711"/>
</dbReference>
<dbReference type="Proteomes" id="UP000006552">
    <property type="component" value="Chromosome"/>
</dbReference>
<dbReference type="GO" id="GO:0009317">
    <property type="term" value="C:acetyl-CoA carboxylase complex"/>
    <property type="evidence" value="ECO:0007669"/>
    <property type="project" value="InterPro"/>
</dbReference>
<dbReference type="GO" id="GO:0003989">
    <property type="term" value="F:acetyl-CoA carboxylase activity"/>
    <property type="evidence" value="ECO:0007669"/>
    <property type="project" value="InterPro"/>
</dbReference>
<dbReference type="GO" id="GO:0005524">
    <property type="term" value="F:ATP binding"/>
    <property type="evidence" value="ECO:0007669"/>
    <property type="project" value="UniProtKB-KW"/>
</dbReference>
<dbReference type="GO" id="GO:0016743">
    <property type="term" value="F:carboxyl- or carbamoyltransferase activity"/>
    <property type="evidence" value="ECO:0007669"/>
    <property type="project" value="UniProtKB-UniRule"/>
</dbReference>
<dbReference type="GO" id="GO:0006633">
    <property type="term" value="P:fatty acid biosynthetic process"/>
    <property type="evidence" value="ECO:0007669"/>
    <property type="project" value="UniProtKB-KW"/>
</dbReference>
<dbReference type="GO" id="GO:2001295">
    <property type="term" value="P:malonyl-CoA biosynthetic process"/>
    <property type="evidence" value="ECO:0007669"/>
    <property type="project" value="UniProtKB-UniRule"/>
</dbReference>
<dbReference type="Gene3D" id="3.90.226.10">
    <property type="entry name" value="2-enoyl-CoA Hydratase, Chain A, domain 1"/>
    <property type="match status" value="1"/>
</dbReference>
<dbReference type="HAMAP" id="MF_00823">
    <property type="entry name" value="AcetylCoA_CT_alpha"/>
    <property type="match status" value="1"/>
</dbReference>
<dbReference type="InterPro" id="IPR001095">
    <property type="entry name" value="Acetyl_CoA_COase_a_su"/>
</dbReference>
<dbReference type="InterPro" id="IPR029045">
    <property type="entry name" value="ClpP/crotonase-like_dom_sf"/>
</dbReference>
<dbReference type="InterPro" id="IPR011763">
    <property type="entry name" value="COA_CT_C"/>
</dbReference>
<dbReference type="NCBIfam" id="TIGR00513">
    <property type="entry name" value="accA"/>
    <property type="match status" value="1"/>
</dbReference>
<dbReference type="NCBIfam" id="NF041504">
    <property type="entry name" value="AccA_sub"/>
    <property type="match status" value="1"/>
</dbReference>
<dbReference type="NCBIfam" id="NF004344">
    <property type="entry name" value="PRK05724.1"/>
    <property type="match status" value="1"/>
</dbReference>
<dbReference type="PANTHER" id="PTHR42853">
    <property type="entry name" value="ACETYL-COENZYME A CARBOXYLASE CARBOXYL TRANSFERASE SUBUNIT ALPHA"/>
    <property type="match status" value="1"/>
</dbReference>
<dbReference type="PANTHER" id="PTHR42853:SF3">
    <property type="entry name" value="ACETYL-COENZYME A CARBOXYLASE CARBOXYL TRANSFERASE SUBUNIT ALPHA, CHLOROPLASTIC"/>
    <property type="match status" value="1"/>
</dbReference>
<dbReference type="Pfam" id="PF03255">
    <property type="entry name" value="ACCA"/>
    <property type="match status" value="1"/>
</dbReference>
<dbReference type="PRINTS" id="PR01069">
    <property type="entry name" value="ACCCTRFRASEA"/>
</dbReference>
<dbReference type="SUPFAM" id="SSF52096">
    <property type="entry name" value="ClpP/crotonase"/>
    <property type="match status" value="1"/>
</dbReference>
<dbReference type="PROSITE" id="PS50989">
    <property type="entry name" value="COA_CT_CTER"/>
    <property type="match status" value="1"/>
</dbReference>
<evidence type="ECO:0000255" key="1">
    <source>
        <dbReference type="HAMAP-Rule" id="MF_00823"/>
    </source>
</evidence>
<evidence type="ECO:0000255" key="2">
    <source>
        <dbReference type="PROSITE-ProRule" id="PRU01137"/>
    </source>
</evidence>
<evidence type="ECO:0000305" key="3"/>
<comment type="function">
    <text evidence="1">Component of the acetyl coenzyme A carboxylase (ACC) complex. First, biotin carboxylase catalyzes the carboxylation of biotin on its carrier protein (BCCP) and then the CO(2) group is transferred by the carboxyltransferase to acetyl-CoA to form malonyl-CoA.</text>
</comment>
<comment type="catalytic activity">
    <reaction evidence="1">
        <text>N(6)-carboxybiotinyl-L-lysyl-[protein] + acetyl-CoA = N(6)-biotinyl-L-lysyl-[protein] + malonyl-CoA</text>
        <dbReference type="Rhea" id="RHEA:54728"/>
        <dbReference type="Rhea" id="RHEA-COMP:10505"/>
        <dbReference type="Rhea" id="RHEA-COMP:10506"/>
        <dbReference type="ChEBI" id="CHEBI:57288"/>
        <dbReference type="ChEBI" id="CHEBI:57384"/>
        <dbReference type="ChEBI" id="CHEBI:83144"/>
        <dbReference type="ChEBI" id="CHEBI:83145"/>
        <dbReference type="EC" id="2.1.3.15"/>
    </reaction>
</comment>
<comment type="pathway">
    <text evidence="1">Lipid metabolism; malonyl-CoA biosynthesis; malonyl-CoA from acetyl-CoA: step 1/1.</text>
</comment>
<comment type="subunit">
    <text evidence="1">Acetyl-CoA carboxylase is a heterohexamer composed of biotin carboxyl carrier protein (AccB), biotin carboxylase (AccC) and two subunits each of ACCase subunit alpha (AccA) and ACCase subunit beta (AccD).</text>
</comment>
<comment type="subcellular location">
    <subcellularLocation>
        <location evidence="1">Cytoplasm</location>
    </subcellularLocation>
</comment>
<comment type="similarity">
    <text evidence="1">Belongs to the AccA family.</text>
</comment>
<comment type="sequence caution" evidence="3">
    <conflict type="erroneous initiation">
        <sequence resource="EMBL-CDS" id="CAI08474"/>
    </conflict>
</comment>
<name>ACCA_AROAE</name>
<keyword id="KW-0067">ATP-binding</keyword>
<keyword id="KW-0963">Cytoplasm</keyword>
<keyword id="KW-0275">Fatty acid biosynthesis</keyword>
<keyword id="KW-0276">Fatty acid metabolism</keyword>
<keyword id="KW-0444">Lipid biosynthesis</keyword>
<keyword id="KW-0443">Lipid metabolism</keyword>
<keyword id="KW-0547">Nucleotide-binding</keyword>
<keyword id="KW-1185">Reference proteome</keyword>
<keyword id="KW-0808">Transferase</keyword>
<protein>
    <recommendedName>
        <fullName evidence="1">Acetyl-coenzyme A carboxylase carboxyl transferase subunit alpha</fullName>
        <shortName evidence="1">ACCase subunit alpha</shortName>
        <shortName evidence="1">Acetyl-CoA carboxylase carboxyltransferase subunit alpha</shortName>
        <ecNumber evidence="1">2.1.3.15</ecNumber>
    </recommendedName>
</protein>
<proteinExistence type="inferred from homology"/>
<sequence length="322" mass="35683">MKTTFLDFEQPVADLEAKIEKLRFVQDDSAVDISEEIARLEAKSQTLSKNLYAKLTPWQIAQVSRHPQRPYTLDYARHIFTDFVELHGDRTYADDKAIVGGLARFNGQSCVVIGHQKGRDTKEKILRNFGMPRPEGYRKALRLMRLAEKFGLPVFTFVDTPGAYPGIDAEERGQSEAIGRNLYVMAELKVPIITTIIGEGGSGGALAIAVGDQVMMLQYATYSVISPEGCASILWKSAEKASEAAETMGITAARLKSLGLIDRVVNEPAGGAHRDHRAMAQTLKRALQDALRQVADLSPAELVEKRLERLMSYGRFKEQKVA</sequence>
<feature type="chain" id="PRO_0000223726" description="Acetyl-coenzyme A carboxylase carboxyl transferase subunit alpha">
    <location>
        <begin position="1"/>
        <end position="322"/>
    </location>
</feature>
<feature type="domain" description="CoA carboxyltransferase C-terminal" evidence="2">
    <location>
        <begin position="32"/>
        <end position="293"/>
    </location>
</feature>